<proteinExistence type="inferred from homology"/>
<keyword id="KW-1185">Reference proteome</keyword>
<comment type="similarity">
    <text evidence="1">Belongs to the DnaA family. HdA subfamily.</text>
</comment>
<accession>O86235</accession>
<sequence>MNKQLPLPIHQIDDATLENFYGDNNLLLLDSLRKNSSDLKQPFFYIWGDKGSGKTHLLRAFSNEYLINQRTAIYVPLSKSQYFSTAVLENLEQQELVCLDDLQSVIGNDEWELAIFDLFNRIKASGKTLLLISADKSPSALSVKLPDLNSRLTWGEIYQLNSLTDEQKIKVLQLAAYQRGFQLSDETANFLITRLARDMHTLFEALDLLDKASLQAQRNLTIPFVKKILNL</sequence>
<reference key="1">
    <citation type="journal article" date="1995" name="Science">
        <title>Whole-genome random sequencing and assembly of Haemophilus influenzae Rd.</title>
        <authorList>
            <person name="Fleischmann R.D."/>
            <person name="Adams M.D."/>
            <person name="White O."/>
            <person name="Clayton R.A."/>
            <person name="Kirkness E.F."/>
            <person name="Kerlavage A.R."/>
            <person name="Bult C.J."/>
            <person name="Tomb J.-F."/>
            <person name="Dougherty B.A."/>
            <person name="Merrick J.M."/>
            <person name="McKenney K."/>
            <person name="Sutton G.G."/>
            <person name="FitzHugh W."/>
            <person name="Fields C.A."/>
            <person name="Gocayne J.D."/>
            <person name="Scott J.D."/>
            <person name="Shirley R."/>
            <person name="Liu L.-I."/>
            <person name="Glodek A."/>
            <person name="Kelley J.M."/>
            <person name="Weidman J.F."/>
            <person name="Phillips C.A."/>
            <person name="Spriggs T."/>
            <person name="Hedblom E."/>
            <person name="Cotton M.D."/>
            <person name="Utterback T.R."/>
            <person name="Hanna M.C."/>
            <person name="Nguyen D.T."/>
            <person name="Saudek D.M."/>
            <person name="Brandon R.C."/>
            <person name="Fine L.D."/>
            <person name="Fritchman J.L."/>
            <person name="Fuhrmann J.L."/>
            <person name="Geoghagen N.S.M."/>
            <person name="Gnehm C.L."/>
            <person name="McDonald L.A."/>
            <person name="Small K.V."/>
            <person name="Fraser C.M."/>
            <person name="Smith H.O."/>
            <person name="Venter J.C."/>
        </authorList>
    </citation>
    <scope>NUCLEOTIDE SEQUENCE [LARGE SCALE GENOMIC DNA]</scope>
    <source>
        <strain>ATCC 51907 / DSM 11121 / KW20 / Rd</strain>
    </source>
</reference>
<reference key="2">
    <citation type="submission" date="1998-05" db="EMBL/GenBank/DDBJ databases">
        <authorList>
            <person name="White O."/>
            <person name="Clayton R.A."/>
            <person name="Kerlavage A.R."/>
            <person name="Fleischmann R.D."/>
            <person name="Peterson J."/>
            <person name="Hickey E."/>
            <person name="Dodson R."/>
            <person name="Gwinn M."/>
        </authorList>
    </citation>
    <scope>IDENTIFICATION</scope>
</reference>
<feature type="chain" id="PRO_0000114324" description="Uncharacterized protein HI_1225.1">
    <location>
        <begin position="1"/>
        <end position="231"/>
    </location>
</feature>
<gene>
    <name type="ordered locus">HI_1225.1</name>
</gene>
<evidence type="ECO:0000305" key="1"/>
<organism>
    <name type="scientific">Haemophilus influenzae (strain ATCC 51907 / DSM 11121 / KW20 / Rd)</name>
    <dbReference type="NCBI Taxonomy" id="71421"/>
    <lineage>
        <taxon>Bacteria</taxon>
        <taxon>Pseudomonadati</taxon>
        <taxon>Pseudomonadota</taxon>
        <taxon>Gammaproteobacteria</taxon>
        <taxon>Pasteurellales</taxon>
        <taxon>Pasteurellaceae</taxon>
        <taxon>Haemophilus</taxon>
    </lineage>
</organism>
<dbReference type="EMBL" id="L42023">
    <property type="protein sequence ID" value="AAC22879.1"/>
    <property type="molecule type" value="Genomic_DNA"/>
</dbReference>
<dbReference type="RefSeq" id="NP_439382.1">
    <property type="nucleotide sequence ID" value="NC_000907.1"/>
</dbReference>
<dbReference type="SMR" id="O86235"/>
<dbReference type="STRING" id="71421.HI_1225.1"/>
<dbReference type="EnsemblBacteria" id="AAC22879">
    <property type="protein sequence ID" value="AAC22879"/>
    <property type="gene ID" value="HI_1225.1"/>
</dbReference>
<dbReference type="KEGG" id="hin:HI_1225.1"/>
<dbReference type="PATRIC" id="fig|71421.8.peg.1278"/>
<dbReference type="eggNOG" id="COG0593">
    <property type="taxonomic scope" value="Bacteria"/>
</dbReference>
<dbReference type="HOGENOM" id="CLU_072265_1_1_6"/>
<dbReference type="OrthoDB" id="9784878at2"/>
<dbReference type="PhylomeDB" id="O86235"/>
<dbReference type="BioCyc" id="HINF71421:G1GJ1-1257-MONOMER"/>
<dbReference type="Proteomes" id="UP000000579">
    <property type="component" value="Chromosome"/>
</dbReference>
<dbReference type="GO" id="GO:0006260">
    <property type="term" value="P:DNA replication"/>
    <property type="evidence" value="ECO:0000318"/>
    <property type="project" value="GO_Central"/>
</dbReference>
<dbReference type="GO" id="GO:0006270">
    <property type="term" value="P:DNA replication initiation"/>
    <property type="evidence" value="ECO:0000318"/>
    <property type="project" value="GO_Central"/>
</dbReference>
<dbReference type="GO" id="GO:0032297">
    <property type="term" value="P:negative regulation of DNA-templated DNA replication initiation"/>
    <property type="evidence" value="ECO:0000318"/>
    <property type="project" value="GO_Central"/>
</dbReference>
<dbReference type="Gene3D" id="1.10.8.60">
    <property type="match status" value="1"/>
</dbReference>
<dbReference type="Gene3D" id="3.40.50.300">
    <property type="entry name" value="P-loop containing nucleotide triphosphate hydrolases"/>
    <property type="match status" value="1"/>
</dbReference>
<dbReference type="InterPro" id="IPR020591">
    <property type="entry name" value="Chromosome_initiator_DnaA-like"/>
</dbReference>
<dbReference type="InterPro" id="IPR013317">
    <property type="entry name" value="DnaA_dom"/>
</dbReference>
<dbReference type="InterPro" id="IPR017788">
    <property type="entry name" value="Hda"/>
</dbReference>
<dbReference type="InterPro" id="IPR055199">
    <property type="entry name" value="Hda_lid"/>
</dbReference>
<dbReference type="InterPro" id="IPR027417">
    <property type="entry name" value="P-loop_NTPase"/>
</dbReference>
<dbReference type="NCBIfam" id="TIGR03420">
    <property type="entry name" value="DnaA_homol_Hda"/>
    <property type="match status" value="1"/>
</dbReference>
<dbReference type="NCBIfam" id="NF005982">
    <property type="entry name" value="PRK08084.1"/>
    <property type="match status" value="1"/>
</dbReference>
<dbReference type="PANTHER" id="PTHR30050">
    <property type="entry name" value="CHROMOSOMAL REPLICATION INITIATOR PROTEIN DNAA"/>
    <property type="match status" value="1"/>
</dbReference>
<dbReference type="PANTHER" id="PTHR30050:SF5">
    <property type="entry name" value="DNAA REGULATORY INACTIVATOR HDA"/>
    <property type="match status" value="1"/>
</dbReference>
<dbReference type="Pfam" id="PF00308">
    <property type="entry name" value="Bac_DnaA"/>
    <property type="match status" value="1"/>
</dbReference>
<dbReference type="Pfam" id="PF22688">
    <property type="entry name" value="Hda_lid"/>
    <property type="match status" value="1"/>
</dbReference>
<dbReference type="PRINTS" id="PR00051">
    <property type="entry name" value="DNAA"/>
</dbReference>
<dbReference type="SUPFAM" id="SSF52540">
    <property type="entry name" value="P-loop containing nucleoside triphosphate hydrolases"/>
    <property type="match status" value="1"/>
</dbReference>
<protein>
    <recommendedName>
        <fullName>Uncharacterized protein HI_1225.1</fullName>
    </recommendedName>
</protein>
<name>Y122B_HAEIN</name>